<geneLocation type="chloroplast"/>
<name>NDHJ_ORYSA</name>
<proteinExistence type="inferred from homology"/>
<organism>
    <name type="scientific">Oryza sativa</name>
    <name type="common">Rice</name>
    <dbReference type="NCBI Taxonomy" id="4530"/>
    <lineage>
        <taxon>Eukaryota</taxon>
        <taxon>Viridiplantae</taxon>
        <taxon>Streptophyta</taxon>
        <taxon>Embryophyta</taxon>
        <taxon>Tracheophyta</taxon>
        <taxon>Spermatophyta</taxon>
        <taxon>Magnoliopsida</taxon>
        <taxon>Liliopsida</taxon>
        <taxon>Poales</taxon>
        <taxon>Poaceae</taxon>
        <taxon>BOP clade</taxon>
        <taxon>Oryzoideae</taxon>
        <taxon>Oryzeae</taxon>
        <taxon>Oryzinae</taxon>
        <taxon>Oryza</taxon>
    </lineage>
</organism>
<keyword id="KW-0150">Chloroplast</keyword>
<keyword id="KW-0472">Membrane</keyword>
<keyword id="KW-0520">NAD</keyword>
<keyword id="KW-0521">NADP</keyword>
<keyword id="KW-0934">Plastid</keyword>
<keyword id="KW-0618">Plastoquinone</keyword>
<keyword id="KW-0874">Quinone</keyword>
<keyword id="KW-0793">Thylakoid</keyword>
<keyword id="KW-1278">Translocase</keyword>
<keyword id="KW-0813">Transport</keyword>
<comment type="function">
    <text evidence="1">NDH shuttles electrons from NAD(P)H:plastoquinone, via FMN and iron-sulfur (Fe-S) centers, to quinones in the photosynthetic chain and possibly in a chloroplast respiratory chain. The immediate electron acceptor for the enzyme in this species is believed to be plastoquinone. Couples the redox reaction to proton translocation, and thus conserves the redox energy in a proton gradient.</text>
</comment>
<comment type="catalytic activity">
    <reaction evidence="1">
        <text>a plastoquinone + NADH + (n+1) H(+)(in) = a plastoquinol + NAD(+) + n H(+)(out)</text>
        <dbReference type="Rhea" id="RHEA:42608"/>
        <dbReference type="Rhea" id="RHEA-COMP:9561"/>
        <dbReference type="Rhea" id="RHEA-COMP:9562"/>
        <dbReference type="ChEBI" id="CHEBI:15378"/>
        <dbReference type="ChEBI" id="CHEBI:17757"/>
        <dbReference type="ChEBI" id="CHEBI:57540"/>
        <dbReference type="ChEBI" id="CHEBI:57945"/>
        <dbReference type="ChEBI" id="CHEBI:62192"/>
    </reaction>
</comment>
<comment type="catalytic activity">
    <reaction evidence="1">
        <text>a plastoquinone + NADPH + (n+1) H(+)(in) = a plastoquinol + NADP(+) + n H(+)(out)</text>
        <dbReference type="Rhea" id="RHEA:42612"/>
        <dbReference type="Rhea" id="RHEA-COMP:9561"/>
        <dbReference type="Rhea" id="RHEA-COMP:9562"/>
        <dbReference type="ChEBI" id="CHEBI:15378"/>
        <dbReference type="ChEBI" id="CHEBI:17757"/>
        <dbReference type="ChEBI" id="CHEBI:57783"/>
        <dbReference type="ChEBI" id="CHEBI:58349"/>
        <dbReference type="ChEBI" id="CHEBI:62192"/>
    </reaction>
</comment>
<comment type="subunit">
    <text evidence="1">NDH is composed of at least 16 different subunits, 5 of which are encoded in the nucleus.</text>
</comment>
<comment type="subcellular location">
    <subcellularLocation>
        <location evidence="1">Plastid</location>
        <location evidence="1">Chloroplast thylakoid membrane</location>
        <topology evidence="1">Peripheral membrane protein</topology>
        <orientation evidence="1">Stromal side</orientation>
    </subcellularLocation>
</comment>
<comment type="similarity">
    <text evidence="1">Belongs to the complex I 30 kDa subunit family.</text>
</comment>
<comment type="sequence caution" evidence="2">
    <conflict type="erroneous initiation">
        <sequence resource="EMBL-CDS" id="AAS46186"/>
    </conflict>
</comment>
<accession>P0C338</accession>
<accession>P12200</accession>
<accession>Q6QY08</accession>
<accession>Q6QY72</accession>
<feature type="chain" id="PRO_0000118660" description="NAD(P)H-quinone oxidoreductase subunit J, chloroplastic">
    <location>
        <begin position="1"/>
        <end position="159"/>
    </location>
</feature>
<gene>
    <name evidence="1" type="primary">ndhJ</name>
    <name type="ORF">PA057</name>
</gene>
<evidence type="ECO:0000255" key="1">
    <source>
        <dbReference type="HAMAP-Rule" id="MF_01357"/>
    </source>
</evidence>
<evidence type="ECO:0000305" key="2"/>
<dbReference type="EC" id="7.1.1.-" evidence="1"/>
<dbReference type="EMBL" id="AY522331">
    <property type="protein sequence ID" value="AAS46186.1"/>
    <property type="status" value="ALT_INIT"/>
    <property type="molecule type" value="Genomic_DNA"/>
</dbReference>
<dbReference type="RefSeq" id="YP_009305307.1">
    <property type="nucleotide sequence ID" value="NC_031333.1"/>
</dbReference>
<dbReference type="SMR" id="P0C338"/>
<dbReference type="GeneID" id="29141370"/>
<dbReference type="GO" id="GO:0009535">
    <property type="term" value="C:chloroplast thylakoid membrane"/>
    <property type="evidence" value="ECO:0007669"/>
    <property type="project" value="UniProtKB-SubCell"/>
</dbReference>
<dbReference type="GO" id="GO:0009536">
    <property type="term" value="C:plastid"/>
    <property type="evidence" value="ECO:0000305"/>
    <property type="project" value="Gramene"/>
</dbReference>
<dbReference type="GO" id="GO:0008137">
    <property type="term" value="F:NADH dehydrogenase (ubiquinone) activity"/>
    <property type="evidence" value="ECO:0007669"/>
    <property type="project" value="InterPro"/>
</dbReference>
<dbReference type="GO" id="GO:0048038">
    <property type="term" value="F:quinone binding"/>
    <property type="evidence" value="ECO:0007669"/>
    <property type="project" value="UniProtKB-KW"/>
</dbReference>
<dbReference type="GO" id="GO:0019684">
    <property type="term" value="P:photosynthesis, light reaction"/>
    <property type="evidence" value="ECO:0007669"/>
    <property type="project" value="UniProtKB-UniRule"/>
</dbReference>
<dbReference type="Gene3D" id="3.30.460.80">
    <property type="entry name" value="NADH:ubiquinone oxidoreductase, 30kDa subunit"/>
    <property type="match status" value="1"/>
</dbReference>
<dbReference type="HAMAP" id="MF_01357">
    <property type="entry name" value="NDH1_NuoC"/>
    <property type="match status" value="1"/>
</dbReference>
<dbReference type="InterPro" id="IPR010218">
    <property type="entry name" value="NADH_DH_suC"/>
</dbReference>
<dbReference type="InterPro" id="IPR037232">
    <property type="entry name" value="NADH_quin_OxRdtase_su_C/D-like"/>
</dbReference>
<dbReference type="InterPro" id="IPR001268">
    <property type="entry name" value="NADH_UbQ_OxRdtase_30kDa_su"/>
</dbReference>
<dbReference type="InterPro" id="IPR020396">
    <property type="entry name" value="NADH_UbQ_OxRdtase_CS"/>
</dbReference>
<dbReference type="NCBIfam" id="NF009141">
    <property type="entry name" value="PRK12494.1"/>
    <property type="match status" value="1"/>
</dbReference>
<dbReference type="PANTHER" id="PTHR10884:SF14">
    <property type="entry name" value="NADH DEHYDROGENASE [UBIQUINONE] IRON-SULFUR PROTEIN 3, MITOCHONDRIAL"/>
    <property type="match status" value="1"/>
</dbReference>
<dbReference type="PANTHER" id="PTHR10884">
    <property type="entry name" value="NADH DEHYDROGENASE UBIQUINONE IRON-SULFUR PROTEIN 3"/>
    <property type="match status" value="1"/>
</dbReference>
<dbReference type="Pfam" id="PF00329">
    <property type="entry name" value="Complex1_30kDa"/>
    <property type="match status" value="1"/>
</dbReference>
<dbReference type="SUPFAM" id="SSF143243">
    <property type="entry name" value="Nqo5-like"/>
    <property type="match status" value="1"/>
</dbReference>
<dbReference type="PROSITE" id="PS00542">
    <property type="entry name" value="COMPLEX1_30K"/>
    <property type="match status" value="1"/>
</dbReference>
<sequence>MQQGWLSNWLVKHEVVHRSLGFDHRGIETLQIKAEDWDSIAVILYVYGYNYLRSQCAYDVAPGGSLASVYHLTRIQYGIDNPEEVCIKVFAQKDNPRIPSVFWIWRSSDFQERESFDMVGISYDNHPRLKRILMPESWIGWPLRKDYITPNFYEIQDAH</sequence>
<protein>
    <recommendedName>
        <fullName evidence="1">NAD(P)H-quinone oxidoreductase subunit J, chloroplastic</fullName>
        <ecNumber evidence="1">7.1.1.-</ecNumber>
    </recommendedName>
    <alternativeName>
        <fullName>NAD(P)H dehydrogenase subunit J</fullName>
    </alternativeName>
    <alternativeName>
        <fullName evidence="1">NADH-plastoquinone oxidoreductase subunit J</fullName>
    </alternativeName>
</protein>
<reference key="1">
    <citation type="journal article" date="2004" name="Plant Physiol.">
        <title>A comparison of rice chloroplast genomes.</title>
        <authorList>
            <person name="Tang J."/>
            <person name="Xia H."/>
            <person name="Cao M."/>
            <person name="Zhang X."/>
            <person name="Zeng W."/>
            <person name="Hu S."/>
            <person name="Tong W."/>
            <person name="Wang J."/>
            <person name="Wang J."/>
            <person name="Yu J."/>
            <person name="Yang H."/>
            <person name="Zhu L."/>
        </authorList>
    </citation>
    <scope>NUCLEOTIDE SEQUENCE [LARGE SCALE GENOMIC DNA]</scope>
    <source>
        <strain>cv. PA64s</strain>
    </source>
</reference>